<keyword id="KW-0004">4Fe-4S</keyword>
<keyword id="KW-0148">Chlorophyll</keyword>
<keyword id="KW-0150">Chloroplast</keyword>
<keyword id="KW-0157">Chromophore</keyword>
<keyword id="KW-0249">Electron transport</keyword>
<keyword id="KW-0408">Iron</keyword>
<keyword id="KW-0411">Iron-sulfur</keyword>
<keyword id="KW-0460">Magnesium</keyword>
<keyword id="KW-0472">Membrane</keyword>
<keyword id="KW-0479">Metal-binding</keyword>
<keyword id="KW-0560">Oxidoreductase</keyword>
<keyword id="KW-0602">Photosynthesis</keyword>
<keyword id="KW-0603">Photosystem I</keyword>
<keyword id="KW-0934">Plastid</keyword>
<keyword id="KW-0793">Thylakoid</keyword>
<keyword id="KW-0812">Transmembrane</keyword>
<keyword id="KW-1133">Transmembrane helix</keyword>
<keyword id="KW-0813">Transport</keyword>
<gene>
    <name evidence="1" type="primary">psaA</name>
</gene>
<comment type="function">
    <text>PsaA and PsaB bind P700, the primary electron donor of photosystem I (PSI), as well as the electron acceptors A0, A1 and FX. PSI is a plastocyanin-ferredoxin oxidoreductase, converting photonic excitation into a charge separation, which transfers an electron from the donor P700 chlorophyll pair to the spectroscopically characterized acceptors A0, A1, FX, FA and FB in turn. Oxidized P700 is reduced on the lumenal side of the thylakoid membrane by plastocyanin.</text>
</comment>
<comment type="catalytic activity">
    <reaction evidence="1">
        <text>reduced [plastocyanin] + hnu + oxidized [2Fe-2S]-[ferredoxin] = oxidized [plastocyanin] + reduced [2Fe-2S]-[ferredoxin]</text>
        <dbReference type="Rhea" id="RHEA:30407"/>
        <dbReference type="Rhea" id="RHEA-COMP:10000"/>
        <dbReference type="Rhea" id="RHEA-COMP:10001"/>
        <dbReference type="Rhea" id="RHEA-COMP:10039"/>
        <dbReference type="Rhea" id="RHEA-COMP:10040"/>
        <dbReference type="ChEBI" id="CHEBI:29036"/>
        <dbReference type="ChEBI" id="CHEBI:30212"/>
        <dbReference type="ChEBI" id="CHEBI:33737"/>
        <dbReference type="ChEBI" id="CHEBI:33738"/>
        <dbReference type="ChEBI" id="CHEBI:49552"/>
        <dbReference type="EC" id="1.97.1.12"/>
    </reaction>
</comment>
<comment type="cofactor">
    <text evidence="1">P700 is a chlorophyll a/chlorophyll a' dimer, A0 is one or more chlorophyll a, A1 is one or both phylloquinones and FX is a shared 4Fe-4S iron-sulfur center.</text>
</comment>
<comment type="subunit">
    <text evidence="1">The PsaA/B heterodimer binds the P700 chlorophyll special pair and subsequent electron acceptors. PSI consists of a core antenna complex that captures photons, and an electron transfer chain that converts photonic excitation into a charge separation. The eukaryotic PSI reaction center is composed of at least 11 subunits.</text>
</comment>
<comment type="subcellular location">
    <subcellularLocation>
        <location evidence="1">Plastid</location>
        <location evidence="1">Chloroplast thylakoid membrane</location>
        <topology evidence="1">Multi-pass membrane protein</topology>
    </subcellularLocation>
</comment>
<comment type="similarity">
    <text evidence="1">Belongs to the PsaA/PsaB family.</text>
</comment>
<reference key="1">
    <citation type="journal article" date="2000" name="Mol. Biol. Evol.">
        <title>Error, bias, and long-branch attraction in data for two chloroplast photosystem genes in seed plants.</title>
        <authorList>
            <person name="Sanderson M.J."/>
            <person name="Wojciechowski M.F."/>
            <person name="Hu J.-M."/>
            <person name="Sher Khan T."/>
            <person name="Brady S.G."/>
        </authorList>
    </citation>
    <scope>NUCLEOTIDE SEQUENCE [GENOMIC DNA]</scope>
</reference>
<dbReference type="EC" id="1.97.1.12" evidence="1"/>
<dbReference type="EMBL" id="AF180024">
    <property type="protein sequence ID" value="AAF29825.1"/>
    <property type="molecule type" value="Genomic_DNA"/>
</dbReference>
<dbReference type="SMR" id="Q9MUJ1"/>
<dbReference type="GO" id="GO:0009535">
    <property type="term" value="C:chloroplast thylakoid membrane"/>
    <property type="evidence" value="ECO:0007669"/>
    <property type="project" value="UniProtKB-SubCell"/>
</dbReference>
<dbReference type="GO" id="GO:0009522">
    <property type="term" value="C:photosystem I"/>
    <property type="evidence" value="ECO:0007669"/>
    <property type="project" value="UniProtKB-KW"/>
</dbReference>
<dbReference type="GO" id="GO:0051539">
    <property type="term" value="F:4 iron, 4 sulfur cluster binding"/>
    <property type="evidence" value="ECO:0007669"/>
    <property type="project" value="UniProtKB-KW"/>
</dbReference>
<dbReference type="GO" id="GO:0016168">
    <property type="term" value="F:chlorophyll binding"/>
    <property type="evidence" value="ECO:0007669"/>
    <property type="project" value="UniProtKB-KW"/>
</dbReference>
<dbReference type="GO" id="GO:0046872">
    <property type="term" value="F:metal ion binding"/>
    <property type="evidence" value="ECO:0007669"/>
    <property type="project" value="UniProtKB-KW"/>
</dbReference>
<dbReference type="GO" id="GO:0016491">
    <property type="term" value="F:oxidoreductase activity"/>
    <property type="evidence" value="ECO:0007669"/>
    <property type="project" value="UniProtKB-KW"/>
</dbReference>
<dbReference type="GO" id="GO:0015979">
    <property type="term" value="P:photosynthesis"/>
    <property type="evidence" value="ECO:0007669"/>
    <property type="project" value="UniProtKB-KW"/>
</dbReference>
<dbReference type="FunFam" id="1.20.1130.10:FF:000001">
    <property type="entry name" value="Photosystem I P700 chlorophyll a apoprotein A2"/>
    <property type="match status" value="1"/>
</dbReference>
<dbReference type="Gene3D" id="1.20.1130.10">
    <property type="entry name" value="Photosystem I PsaA/PsaB"/>
    <property type="match status" value="1"/>
</dbReference>
<dbReference type="HAMAP" id="MF_00458">
    <property type="entry name" value="PSI_PsaA"/>
    <property type="match status" value="1"/>
</dbReference>
<dbReference type="InterPro" id="IPR006243">
    <property type="entry name" value="PSI_PsaA"/>
</dbReference>
<dbReference type="InterPro" id="IPR001280">
    <property type="entry name" value="PSI_PsaA/B"/>
</dbReference>
<dbReference type="InterPro" id="IPR020586">
    <property type="entry name" value="PSI_PsaA/B_CS"/>
</dbReference>
<dbReference type="InterPro" id="IPR036408">
    <property type="entry name" value="PSI_PsaA/B_sf"/>
</dbReference>
<dbReference type="NCBIfam" id="TIGR01335">
    <property type="entry name" value="psaA"/>
    <property type="match status" value="1"/>
</dbReference>
<dbReference type="PANTHER" id="PTHR30128">
    <property type="entry name" value="OUTER MEMBRANE PROTEIN, OMPA-RELATED"/>
    <property type="match status" value="1"/>
</dbReference>
<dbReference type="PANTHER" id="PTHR30128:SF19">
    <property type="entry name" value="PHOTOSYSTEM I P700 CHLOROPHYLL A APOPROTEIN A1-RELATED"/>
    <property type="match status" value="1"/>
</dbReference>
<dbReference type="Pfam" id="PF00223">
    <property type="entry name" value="PsaA_PsaB"/>
    <property type="match status" value="1"/>
</dbReference>
<dbReference type="PIRSF" id="PIRSF002905">
    <property type="entry name" value="PSI_A"/>
    <property type="match status" value="1"/>
</dbReference>
<dbReference type="PRINTS" id="PR00257">
    <property type="entry name" value="PHOTSYSPSAAB"/>
</dbReference>
<dbReference type="SUPFAM" id="SSF81558">
    <property type="entry name" value="Photosystem I subunits PsaA/PsaB"/>
    <property type="match status" value="1"/>
</dbReference>
<dbReference type="PROSITE" id="PS00419">
    <property type="entry name" value="PHOTOSYSTEM_I_PSAAB"/>
    <property type="match status" value="1"/>
</dbReference>
<proteinExistence type="inferred from homology"/>
<organism>
    <name type="scientific">Phlegmariurus squarrosus</name>
    <name type="common">Rock tassel fern</name>
    <name type="synonym">Lycopodium squarrosum</name>
    <dbReference type="NCBI Taxonomy" id="73615"/>
    <lineage>
        <taxon>Eukaryota</taxon>
        <taxon>Viridiplantae</taxon>
        <taxon>Streptophyta</taxon>
        <taxon>Embryophyta</taxon>
        <taxon>Tracheophyta</taxon>
        <taxon>Lycopodiopsida</taxon>
        <taxon>Lycopodiales</taxon>
        <taxon>Lycopodiaceae</taxon>
        <taxon>Huperzioideae</taxon>
        <taxon>Phlegmariurus</taxon>
    </lineage>
</organism>
<name>PSAA_PHLSQ</name>
<accession>Q9MUJ1</accession>
<feature type="chain" id="PRO_0000088555" description="Photosystem I P700 chlorophyll a apoprotein A1">
    <location>
        <begin position="1" status="less than"/>
        <end position="715" status="greater than"/>
    </location>
</feature>
<feature type="transmembrane region" description="Helical; Name=I" evidence="1">
    <location>
        <begin position="60"/>
        <end position="83"/>
    </location>
</feature>
<feature type="transmembrane region" description="Helical; Name=II" evidence="1">
    <location>
        <begin position="146"/>
        <end position="169"/>
    </location>
</feature>
<feature type="transmembrane region" description="Helical; Name=III" evidence="1">
    <location>
        <begin position="185"/>
        <end position="209"/>
    </location>
</feature>
<feature type="transmembrane region" description="Helical; Name=IV" evidence="1">
    <location>
        <begin position="281"/>
        <end position="299"/>
    </location>
</feature>
<feature type="transmembrane region" description="Helical; Name=V" evidence="1">
    <location>
        <begin position="336"/>
        <end position="359"/>
    </location>
</feature>
<feature type="transmembrane region" description="Helical; Name=VI" evidence="1">
    <location>
        <begin position="375"/>
        <end position="401"/>
    </location>
</feature>
<feature type="transmembrane region" description="Helical; Name=VII" evidence="1">
    <location>
        <begin position="423"/>
        <end position="445"/>
    </location>
</feature>
<feature type="transmembrane region" description="Helical; Name=VIII" evidence="1">
    <location>
        <begin position="521"/>
        <end position="539"/>
    </location>
</feature>
<feature type="transmembrane region" description="Helical; Name=IX" evidence="1">
    <location>
        <begin position="579"/>
        <end position="600"/>
    </location>
</feature>
<feature type="transmembrane region" description="Helical; Name=X" evidence="1">
    <location>
        <begin position="654"/>
        <end position="676"/>
    </location>
</feature>
<feature type="transmembrane region" description="Helical; Name=XI" evidence="1">
    <location>
        <begin position="714"/>
        <end position="715" status="greater than"/>
    </location>
</feature>
<feature type="binding site" evidence="1">
    <location>
        <position position="563"/>
    </location>
    <ligand>
        <name>[4Fe-4S] cluster</name>
        <dbReference type="ChEBI" id="CHEBI:49883"/>
        <note>ligand shared between dimeric partners</note>
    </ligand>
</feature>
<feature type="binding site" evidence="1">
    <location>
        <position position="572"/>
    </location>
    <ligand>
        <name>[4Fe-4S] cluster</name>
        <dbReference type="ChEBI" id="CHEBI:49883"/>
        <note>ligand shared between dimeric partners</note>
    </ligand>
</feature>
<feature type="binding site" description="axial binding residue" evidence="1">
    <location>
        <position position="665"/>
    </location>
    <ligand>
        <name>chlorophyll a'</name>
        <dbReference type="ChEBI" id="CHEBI:189419"/>
        <label>A1</label>
    </ligand>
    <ligandPart>
        <name>Mg</name>
        <dbReference type="ChEBI" id="CHEBI:25107"/>
    </ligandPart>
</feature>
<feature type="binding site" description="axial binding residue" evidence="1">
    <location>
        <position position="673"/>
    </location>
    <ligand>
        <name>chlorophyll a</name>
        <dbReference type="ChEBI" id="CHEBI:58416"/>
        <label>A3</label>
    </ligand>
    <ligandPart>
        <name>Mg</name>
        <dbReference type="ChEBI" id="CHEBI:25107"/>
    </ligandPart>
</feature>
<feature type="binding site" evidence="1">
    <location>
        <position position="681"/>
    </location>
    <ligand>
        <name>chlorophyll a</name>
        <dbReference type="ChEBI" id="CHEBI:58416"/>
        <label>A3</label>
    </ligand>
</feature>
<feature type="binding site" evidence="1">
    <location>
        <position position="682"/>
    </location>
    <ligand>
        <name>phylloquinone</name>
        <dbReference type="ChEBI" id="CHEBI:18067"/>
        <label>A</label>
    </ligand>
</feature>
<feature type="non-terminal residue">
    <location>
        <position position="1"/>
    </location>
</feature>
<feature type="non-terminal residue">
    <location>
        <position position="715"/>
    </location>
</feature>
<protein>
    <recommendedName>
        <fullName evidence="1">Photosystem I P700 chlorophyll a apoprotein A1</fullName>
        <ecNumber evidence="1">1.97.1.12</ecNumber>
    </recommendedName>
    <alternativeName>
        <fullName evidence="1">PSI-A</fullName>
    </alternativeName>
    <alternativeName>
        <fullName evidence="1">PsaA</fullName>
    </alternativeName>
</protein>
<sequence>KIAVERDPVKTSFEKWAQPGHFSRTLAKGPSTTTWIWNLHADAHDFDSHTNDLEDISRKVFSAHFGQLAIIFIWLSGMYFHGARFSNYEAWLSDPTHVKPSAQVVWPIVGQEILNGDVGGGFQGIQITSGFFQIWRASGITSELQLYSTAIGGLIFAALMLFAGWFHYHKAAPKLTWFQDVESMLNHHLAGLLGLGSLSWAGHQVHVSLPINQLLDAGVDAKEIPLPHEFILNRDLMTQLYPSFAKGLTPFFTLNWSEYSDFSTFRGGLNPVTGGLWLTDTVHHHLAIAVLFLIAGHMYRTNWGIGHSLKEILEAHKGPFTGEGHKGLYEIFTTSWHAQLALNLAMLGSLTIIVAHHMYSMPPYPYLATDYGTQLSLFTHHMWIGGFLVVGAAAHAAIFMVRDYDPTTQYNNLLDRVLRHRDAIISHLNWACIFLGFHSFGLYIHNDTMSALGRPQDMFSDTAIQLQPVFAQWVQNTHAVAPFSTAPNAAASTSLTWGGIDLVAVGGKVALLPIPLGTADFLVHHIHAFTIHVTVLILLKGVLFARSSRLIPDKANLGFRFPCDGPGRGGTCQVSAWDHVFLGLFWMYNAISVVIFHFSWKMQSDVWGSVSDQKIVTHITGGNFAQSSITINGWLRDFLWAQASQVIQSYGSSLSAYGLLFLGAHFVWAFSLMFLFSGRGYWQELIESIVWAHNKLKVAPAIQPRALSIVQGRAE</sequence>
<geneLocation type="chloroplast"/>
<evidence type="ECO:0000255" key="1">
    <source>
        <dbReference type="HAMAP-Rule" id="MF_00458"/>
    </source>
</evidence>